<keyword id="KW-0066">ATP synthesis</keyword>
<keyword id="KW-0997">Cell inner membrane</keyword>
<keyword id="KW-1003">Cell membrane</keyword>
<keyword id="KW-0139">CF(1)</keyword>
<keyword id="KW-0375">Hydrogen ion transport</keyword>
<keyword id="KW-0406">Ion transport</keyword>
<keyword id="KW-0472">Membrane</keyword>
<keyword id="KW-1185">Reference proteome</keyword>
<keyword id="KW-0813">Transport</keyword>
<sequence>MSELTTLARPYAKAVFEVAQGAGDLARWSDQLGFMAAVVHDPTMKAFLDSPKLTREAAADTVIGVCEGRIDDQGKNFVRLLAENGRLTLLPEIAAIYEVMRAEAEGKVEALVVSAQPVSDAQKSAIAQSLAKRLGREVELVCEVDESLIGGAVIRAGDLVIDGSVRGRLERMAANLSR</sequence>
<reference key="1">
    <citation type="journal article" date="2011" name="Stand. Genomic Sci.">
        <title>Complete genome sequence of 'Thioalkalivibrio sulfidophilus' HL-EbGr7.</title>
        <authorList>
            <person name="Muyzer G."/>
            <person name="Sorokin D.Y."/>
            <person name="Mavromatis K."/>
            <person name="Lapidus A."/>
            <person name="Clum A."/>
            <person name="Ivanova N."/>
            <person name="Pati A."/>
            <person name="d'Haeseleer P."/>
            <person name="Woyke T."/>
            <person name="Kyrpides N.C."/>
        </authorList>
    </citation>
    <scope>NUCLEOTIDE SEQUENCE [LARGE SCALE GENOMIC DNA]</scope>
    <source>
        <strain>HL-EbGR7</strain>
    </source>
</reference>
<name>ATPD_THISH</name>
<protein>
    <recommendedName>
        <fullName evidence="1">ATP synthase subunit delta</fullName>
    </recommendedName>
    <alternativeName>
        <fullName evidence="1">ATP synthase F(1) sector subunit delta</fullName>
    </alternativeName>
    <alternativeName>
        <fullName evidence="1">F-type ATPase subunit delta</fullName>
        <shortName evidence="1">F-ATPase subunit delta</shortName>
    </alternativeName>
</protein>
<comment type="function">
    <text evidence="1">F(1)F(0) ATP synthase produces ATP from ADP in the presence of a proton or sodium gradient. F-type ATPases consist of two structural domains, F(1) containing the extramembraneous catalytic core and F(0) containing the membrane proton channel, linked together by a central stalk and a peripheral stalk. During catalysis, ATP synthesis in the catalytic domain of F(1) is coupled via a rotary mechanism of the central stalk subunits to proton translocation.</text>
</comment>
<comment type="function">
    <text evidence="1">This protein is part of the stalk that links CF(0) to CF(1). It either transmits conformational changes from CF(0) to CF(1) or is implicated in proton conduction.</text>
</comment>
<comment type="subunit">
    <text evidence="1">F-type ATPases have 2 components, F(1) - the catalytic core - and F(0) - the membrane proton channel. F(1) has five subunits: alpha(3), beta(3), gamma(1), delta(1), epsilon(1). F(0) has three main subunits: a(1), b(2) and c(10-14). The alpha and beta chains form an alternating ring which encloses part of the gamma chain. F(1) is attached to F(0) by a central stalk formed by the gamma and epsilon chains, while a peripheral stalk is formed by the delta and b chains.</text>
</comment>
<comment type="subcellular location">
    <subcellularLocation>
        <location evidence="1">Cell inner membrane</location>
        <topology evidence="1">Peripheral membrane protein</topology>
    </subcellularLocation>
</comment>
<comment type="similarity">
    <text evidence="1">Belongs to the ATPase delta chain family.</text>
</comment>
<feature type="chain" id="PRO_1000184825" description="ATP synthase subunit delta">
    <location>
        <begin position="1"/>
        <end position="178"/>
    </location>
</feature>
<evidence type="ECO:0000255" key="1">
    <source>
        <dbReference type="HAMAP-Rule" id="MF_01416"/>
    </source>
</evidence>
<gene>
    <name evidence="1" type="primary">atpH</name>
    <name type="ordered locus">Tgr7_3308</name>
</gene>
<accession>B8GRC1</accession>
<proteinExistence type="inferred from homology"/>
<dbReference type="EMBL" id="CP001339">
    <property type="protein sequence ID" value="ACL74375.1"/>
    <property type="molecule type" value="Genomic_DNA"/>
</dbReference>
<dbReference type="RefSeq" id="WP_012639837.1">
    <property type="nucleotide sequence ID" value="NC_011901.1"/>
</dbReference>
<dbReference type="SMR" id="B8GRC1"/>
<dbReference type="STRING" id="396588.Tgr7_3308"/>
<dbReference type="KEGG" id="tgr:Tgr7_3308"/>
<dbReference type="eggNOG" id="COG0712">
    <property type="taxonomic scope" value="Bacteria"/>
</dbReference>
<dbReference type="HOGENOM" id="CLU_085114_3_0_6"/>
<dbReference type="OrthoDB" id="9816221at2"/>
<dbReference type="Proteomes" id="UP000002383">
    <property type="component" value="Chromosome"/>
</dbReference>
<dbReference type="GO" id="GO:0005886">
    <property type="term" value="C:plasma membrane"/>
    <property type="evidence" value="ECO:0007669"/>
    <property type="project" value="UniProtKB-SubCell"/>
</dbReference>
<dbReference type="GO" id="GO:0045259">
    <property type="term" value="C:proton-transporting ATP synthase complex"/>
    <property type="evidence" value="ECO:0007669"/>
    <property type="project" value="UniProtKB-KW"/>
</dbReference>
<dbReference type="GO" id="GO:0046933">
    <property type="term" value="F:proton-transporting ATP synthase activity, rotational mechanism"/>
    <property type="evidence" value="ECO:0007669"/>
    <property type="project" value="UniProtKB-UniRule"/>
</dbReference>
<dbReference type="Gene3D" id="1.10.520.20">
    <property type="entry name" value="N-terminal domain of the delta subunit of the F1F0-ATP synthase"/>
    <property type="match status" value="1"/>
</dbReference>
<dbReference type="HAMAP" id="MF_01416">
    <property type="entry name" value="ATP_synth_delta_bact"/>
    <property type="match status" value="1"/>
</dbReference>
<dbReference type="InterPro" id="IPR026015">
    <property type="entry name" value="ATP_synth_OSCP/delta_N_sf"/>
</dbReference>
<dbReference type="InterPro" id="IPR020781">
    <property type="entry name" value="ATPase_OSCP/d_CS"/>
</dbReference>
<dbReference type="InterPro" id="IPR000711">
    <property type="entry name" value="ATPase_OSCP/dsu"/>
</dbReference>
<dbReference type="NCBIfam" id="TIGR01145">
    <property type="entry name" value="ATP_synt_delta"/>
    <property type="match status" value="1"/>
</dbReference>
<dbReference type="NCBIfam" id="NF004402">
    <property type="entry name" value="PRK05758.2-2"/>
    <property type="match status" value="1"/>
</dbReference>
<dbReference type="PANTHER" id="PTHR11910">
    <property type="entry name" value="ATP SYNTHASE DELTA CHAIN"/>
    <property type="match status" value="1"/>
</dbReference>
<dbReference type="Pfam" id="PF00213">
    <property type="entry name" value="OSCP"/>
    <property type="match status" value="1"/>
</dbReference>
<dbReference type="PRINTS" id="PR00125">
    <property type="entry name" value="ATPASEDELTA"/>
</dbReference>
<dbReference type="SUPFAM" id="SSF47928">
    <property type="entry name" value="N-terminal domain of the delta subunit of the F1F0-ATP synthase"/>
    <property type="match status" value="1"/>
</dbReference>
<dbReference type="PROSITE" id="PS00389">
    <property type="entry name" value="ATPASE_DELTA"/>
    <property type="match status" value="1"/>
</dbReference>
<organism>
    <name type="scientific">Thioalkalivibrio sulfidiphilus (strain HL-EbGR7)</name>
    <dbReference type="NCBI Taxonomy" id="396588"/>
    <lineage>
        <taxon>Bacteria</taxon>
        <taxon>Pseudomonadati</taxon>
        <taxon>Pseudomonadota</taxon>
        <taxon>Gammaproteobacteria</taxon>
        <taxon>Chromatiales</taxon>
        <taxon>Ectothiorhodospiraceae</taxon>
        <taxon>Thioalkalivibrio</taxon>
    </lineage>
</organism>